<sequence>MNIRIGTRGSILAIAQTLEIKNLLNRYFPEISVQIVKIKTSGDINNQVPLSAIGGKSLFIKEIEEALLMGKVDLAVHSVKDIPAFYCEGLIIPCVLKRNSPYDVFISSKHKDIKSLPLNATIGTSSVRRKVQLNYLRPDLQVVPVRGNIDTRILKANVGEFDGIVLAEAGLIRINRCDVIKEILSPKIMLSAVGQGAIGIQCRVDDHSIINKIKVLNCHQSYVCVMAERSFLKTINGSCDTPLAALAQYVNNDTIHMSCMLANEKNMVFASCCFNECDAEKSGINMGKKLMDELSQYY</sequence>
<comment type="function">
    <text evidence="1">Tetrapolymerization of the monopyrrole PBG into the hydroxymethylbilane pre-uroporphyrinogen in several discrete steps.</text>
</comment>
<comment type="catalytic activity">
    <reaction evidence="1">
        <text>4 porphobilinogen + H2O = hydroxymethylbilane + 4 NH4(+)</text>
        <dbReference type="Rhea" id="RHEA:13185"/>
        <dbReference type="ChEBI" id="CHEBI:15377"/>
        <dbReference type="ChEBI" id="CHEBI:28938"/>
        <dbReference type="ChEBI" id="CHEBI:57845"/>
        <dbReference type="ChEBI" id="CHEBI:58126"/>
        <dbReference type="EC" id="2.5.1.61"/>
    </reaction>
</comment>
<comment type="cofactor">
    <cofactor evidence="1">
        <name>dipyrromethane</name>
        <dbReference type="ChEBI" id="CHEBI:60342"/>
    </cofactor>
    <text evidence="1">Binds 1 dipyrromethane group covalently.</text>
</comment>
<comment type="pathway">
    <text evidence="1">Porphyrin-containing compound metabolism; protoporphyrin-IX biosynthesis; coproporphyrinogen-III from 5-aminolevulinate: step 2/4.</text>
</comment>
<comment type="subunit">
    <text evidence="1">Monomer.</text>
</comment>
<comment type="miscellaneous">
    <text evidence="1">The porphobilinogen subunits are added to the dipyrromethane group.</text>
</comment>
<comment type="similarity">
    <text evidence="1">Belongs to the HMBS family.</text>
</comment>
<accession>Q2GGC7</accession>
<proteinExistence type="inferred from homology"/>
<evidence type="ECO:0000255" key="1">
    <source>
        <dbReference type="HAMAP-Rule" id="MF_00260"/>
    </source>
</evidence>
<organism>
    <name type="scientific">Ehrlichia chaffeensis (strain ATCC CRL-10679 / Arkansas)</name>
    <dbReference type="NCBI Taxonomy" id="205920"/>
    <lineage>
        <taxon>Bacteria</taxon>
        <taxon>Pseudomonadati</taxon>
        <taxon>Pseudomonadota</taxon>
        <taxon>Alphaproteobacteria</taxon>
        <taxon>Rickettsiales</taxon>
        <taxon>Anaplasmataceae</taxon>
        <taxon>Ehrlichia</taxon>
    </lineage>
</organism>
<protein>
    <recommendedName>
        <fullName evidence="1">Porphobilinogen deaminase</fullName>
        <shortName evidence="1">PBG</shortName>
        <ecNumber evidence="1">2.5.1.61</ecNumber>
    </recommendedName>
    <alternativeName>
        <fullName evidence="1">Hydroxymethylbilane synthase</fullName>
        <shortName evidence="1">HMBS</shortName>
    </alternativeName>
    <alternativeName>
        <fullName evidence="1">Pre-uroporphyrinogen synthase</fullName>
    </alternativeName>
</protein>
<dbReference type="EC" id="2.5.1.61" evidence="1"/>
<dbReference type="EMBL" id="CP000236">
    <property type="protein sequence ID" value="ABD44669.1"/>
    <property type="molecule type" value="Genomic_DNA"/>
</dbReference>
<dbReference type="RefSeq" id="WP_006009846.1">
    <property type="nucleotide sequence ID" value="NC_007799.1"/>
</dbReference>
<dbReference type="SMR" id="Q2GGC7"/>
<dbReference type="STRING" id="205920.ECH_0701"/>
<dbReference type="KEGG" id="ech:ECH_0701"/>
<dbReference type="eggNOG" id="COG0181">
    <property type="taxonomic scope" value="Bacteria"/>
</dbReference>
<dbReference type="HOGENOM" id="CLU_019704_1_0_5"/>
<dbReference type="OrthoDB" id="9810298at2"/>
<dbReference type="UniPathway" id="UPA00251">
    <property type="reaction ID" value="UER00319"/>
</dbReference>
<dbReference type="Proteomes" id="UP000008320">
    <property type="component" value="Chromosome"/>
</dbReference>
<dbReference type="GO" id="GO:0005737">
    <property type="term" value="C:cytoplasm"/>
    <property type="evidence" value="ECO:0007669"/>
    <property type="project" value="TreeGrafter"/>
</dbReference>
<dbReference type="GO" id="GO:0004418">
    <property type="term" value="F:hydroxymethylbilane synthase activity"/>
    <property type="evidence" value="ECO:0007669"/>
    <property type="project" value="UniProtKB-UniRule"/>
</dbReference>
<dbReference type="GO" id="GO:0006782">
    <property type="term" value="P:protoporphyrinogen IX biosynthetic process"/>
    <property type="evidence" value="ECO:0007669"/>
    <property type="project" value="UniProtKB-UniRule"/>
</dbReference>
<dbReference type="FunFam" id="3.40.190.10:FF:000005">
    <property type="entry name" value="Porphobilinogen deaminase"/>
    <property type="match status" value="1"/>
</dbReference>
<dbReference type="Gene3D" id="3.40.190.10">
    <property type="entry name" value="Periplasmic binding protein-like II"/>
    <property type="match status" value="2"/>
</dbReference>
<dbReference type="Gene3D" id="3.30.160.40">
    <property type="entry name" value="Porphobilinogen deaminase, C-terminal domain"/>
    <property type="match status" value="1"/>
</dbReference>
<dbReference type="HAMAP" id="MF_00260">
    <property type="entry name" value="Porphobil_deam"/>
    <property type="match status" value="1"/>
</dbReference>
<dbReference type="InterPro" id="IPR000860">
    <property type="entry name" value="HemC"/>
</dbReference>
<dbReference type="InterPro" id="IPR022419">
    <property type="entry name" value="Porphobilin_deaminase_cofac_BS"/>
</dbReference>
<dbReference type="InterPro" id="IPR022417">
    <property type="entry name" value="Porphobilin_deaminase_N"/>
</dbReference>
<dbReference type="InterPro" id="IPR022418">
    <property type="entry name" value="Porphobilinogen_deaminase_C"/>
</dbReference>
<dbReference type="InterPro" id="IPR036803">
    <property type="entry name" value="Porphobilinogen_deaminase_C_sf"/>
</dbReference>
<dbReference type="NCBIfam" id="TIGR00212">
    <property type="entry name" value="hemC"/>
    <property type="match status" value="1"/>
</dbReference>
<dbReference type="PANTHER" id="PTHR11557">
    <property type="entry name" value="PORPHOBILINOGEN DEAMINASE"/>
    <property type="match status" value="1"/>
</dbReference>
<dbReference type="PANTHER" id="PTHR11557:SF0">
    <property type="entry name" value="PORPHOBILINOGEN DEAMINASE"/>
    <property type="match status" value="1"/>
</dbReference>
<dbReference type="Pfam" id="PF01379">
    <property type="entry name" value="Porphobil_deam"/>
    <property type="match status" value="1"/>
</dbReference>
<dbReference type="Pfam" id="PF03900">
    <property type="entry name" value="Porphobil_deamC"/>
    <property type="match status" value="1"/>
</dbReference>
<dbReference type="PIRSF" id="PIRSF001438">
    <property type="entry name" value="4pyrrol_synth_OHMeBilane_synth"/>
    <property type="match status" value="1"/>
</dbReference>
<dbReference type="PRINTS" id="PR00151">
    <property type="entry name" value="PORPHBDMNASE"/>
</dbReference>
<dbReference type="SUPFAM" id="SSF53850">
    <property type="entry name" value="Periplasmic binding protein-like II"/>
    <property type="match status" value="1"/>
</dbReference>
<dbReference type="SUPFAM" id="SSF54782">
    <property type="entry name" value="Porphobilinogen deaminase (hydroxymethylbilane synthase), C-terminal domain"/>
    <property type="match status" value="1"/>
</dbReference>
<dbReference type="PROSITE" id="PS00533">
    <property type="entry name" value="PORPHOBILINOGEN_DEAM"/>
    <property type="match status" value="1"/>
</dbReference>
<reference key="1">
    <citation type="journal article" date="2006" name="PLoS Genet.">
        <title>Comparative genomics of emerging human ehrlichiosis agents.</title>
        <authorList>
            <person name="Dunning Hotopp J.C."/>
            <person name="Lin M."/>
            <person name="Madupu R."/>
            <person name="Crabtree J."/>
            <person name="Angiuoli S.V."/>
            <person name="Eisen J.A."/>
            <person name="Seshadri R."/>
            <person name="Ren Q."/>
            <person name="Wu M."/>
            <person name="Utterback T.R."/>
            <person name="Smith S."/>
            <person name="Lewis M."/>
            <person name="Khouri H."/>
            <person name="Zhang C."/>
            <person name="Niu H."/>
            <person name="Lin Q."/>
            <person name="Ohashi N."/>
            <person name="Zhi N."/>
            <person name="Nelson W.C."/>
            <person name="Brinkac L.M."/>
            <person name="Dodson R.J."/>
            <person name="Rosovitz M.J."/>
            <person name="Sundaram J.P."/>
            <person name="Daugherty S.C."/>
            <person name="Davidsen T."/>
            <person name="Durkin A.S."/>
            <person name="Gwinn M.L."/>
            <person name="Haft D.H."/>
            <person name="Selengut J.D."/>
            <person name="Sullivan S.A."/>
            <person name="Zafar N."/>
            <person name="Zhou L."/>
            <person name="Benahmed F."/>
            <person name="Forberger H."/>
            <person name="Halpin R."/>
            <person name="Mulligan S."/>
            <person name="Robinson J."/>
            <person name="White O."/>
            <person name="Rikihisa Y."/>
            <person name="Tettelin H."/>
        </authorList>
    </citation>
    <scope>NUCLEOTIDE SEQUENCE [LARGE SCALE GENOMIC DNA]</scope>
    <source>
        <strain>ATCC CRL-10679 / Arkansas</strain>
    </source>
</reference>
<feature type="chain" id="PRO_1000059097" description="Porphobilinogen deaminase">
    <location>
        <begin position="1"/>
        <end position="298"/>
    </location>
</feature>
<feature type="modified residue" description="S-(dipyrrolylmethanemethyl)cysteine" evidence="1">
    <location>
        <position position="239"/>
    </location>
</feature>
<name>HEM3_EHRCR</name>
<gene>
    <name evidence="1" type="primary">hemC</name>
    <name type="ordered locus">ECH_0701</name>
</gene>
<keyword id="KW-0627">Porphyrin biosynthesis</keyword>
<keyword id="KW-1185">Reference proteome</keyword>
<keyword id="KW-0808">Transferase</keyword>